<proteinExistence type="inferred from homology"/>
<reference key="1">
    <citation type="journal article" date="1999" name="Nature">
        <title>Genomic sequence comparison of two unrelated isolates of the human gastric pathogen Helicobacter pylori.</title>
        <authorList>
            <person name="Alm R.A."/>
            <person name="Ling L.-S.L."/>
            <person name="Moir D.T."/>
            <person name="King B.L."/>
            <person name="Brown E.D."/>
            <person name="Doig P.C."/>
            <person name="Smith D.R."/>
            <person name="Noonan B."/>
            <person name="Guild B.C."/>
            <person name="deJonge B.L."/>
            <person name="Carmel G."/>
            <person name="Tummino P.J."/>
            <person name="Caruso A."/>
            <person name="Uria-Nickelsen M."/>
            <person name="Mills D.M."/>
            <person name="Ives C."/>
            <person name="Gibson R."/>
            <person name="Merberg D."/>
            <person name="Mills S.D."/>
            <person name="Jiang Q."/>
            <person name="Taylor D.E."/>
            <person name="Vovis G.F."/>
            <person name="Trust T.J."/>
        </authorList>
    </citation>
    <scope>NUCLEOTIDE SEQUENCE [LARGE SCALE GENOMIC DNA]</scope>
    <source>
        <strain>J99 / ATCC 700824</strain>
    </source>
</reference>
<organism>
    <name type="scientific">Helicobacter pylori (strain J99 / ATCC 700824)</name>
    <name type="common">Campylobacter pylori J99</name>
    <dbReference type="NCBI Taxonomy" id="85963"/>
    <lineage>
        <taxon>Bacteria</taxon>
        <taxon>Pseudomonadati</taxon>
        <taxon>Campylobacterota</taxon>
        <taxon>Epsilonproteobacteria</taxon>
        <taxon>Campylobacterales</taxon>
        <taxon>Helicobacteraceae</taxon>
        <taxon>Helicobacter</taxon>
    </lineage>
</organism>
<sequence>MARKTPLNRIRNIGIAAHIDAGKTTTSERILFYTGVSHKIGEVHDGAATMDWMEQEKERGITITSAATTCFWKDHQINLIDTPGHVDFTIEVERSMRVLDGAVSVFCSVGGVQPQSETVWRQANKYGVPRIVFVNKMDRIGANFYNVENQIKQRLKANPVPINIPIGAEDTFIGVIDLVQMKAIVWNNETMGAKYDVEEIPSDLLEKAKQYREKLVEAVAEQDEALMEKYLGGEELDIEEIKKGIKTGCLNMSFVPMLCGSSFKNKGVQTLLDAVIDYLPAPTEVVDIKGIDPKTEEEVFVKSSDDGEFAGLAFKIMTDPFVGQLTFVRVYRGKLESGSYVYNSTKDKKERVGRLLKMHSNKREDIKEVYAGEICAFVGLKDTLTGDTLCDEKNAVVLERMEFPEPVIHIAVEPKTKADQEKMGVALGKLAEEDPSFRVMTQEETGQTLIGGMGELHLEIIVDRLKREFKVEAEIGQPQVAFRETIRSSVSKEHKYAKQSGGRGQYGHVFIKLEPKEPGSGYEFVNEISGGVIPKEYIPAVDKGIQEAMQNGVLAGYPVVDFKVTLYDGSYHDVDSSEMAFKIAGSMAFKEASRAANPVLLEPMMKVEVEVPEEYMGDVIGDLNRRRGQINSMDDRLGLKIVNAFVPLVEMFGYSTDLRSATQGRGTYSMEFDHYGEVPSNIAKEIVEKRKG</sequence>
<protein>
    <recommendedName>
        <fullName>Elongation factor G</fullName>
        <shortName>EF-G</shortName>
    </recommendedName>
</protein>
<accession>Q9ZK24</accession>
<keyword id="KW-0963">Cytoplasm</keyword>
<keyword id="KW-0251">Elongation factor</keyword>
<keyword id="KW-0342">GTP-binding</keyword>
<keyword id="KW-0547">Nucleotide-binding</keyword>
<keyword id="KW-0648">Protein biosynthesis</keyword>
<feature type="initiator methionine" description="Removed" evidence="1">
    <location>
        <position position="1"/>
    </location>
</feature>
<feature type="chain" id="PRO_0000091135" description="Elongation factor G">
    <location>
        <begin position="2"/>
        <end position="692"/>
    </location>
</feature>
<feature type="domain" description="tr-type G">
    <location>
        <begin position="8"/>
        <end position="283"/>
    </location>
</feature>
<feature type="binding site" evidence="1">
    <location>
        <begin position="17"/>
        <end position="24"/>
    </location>
    <ligand>
        <name>GTP</name>
        <dbReference type="ChEBI" id="CHEBI:37565"/>
    </ligand>
</feature>
<feature type="binding site" evidence="1">
    <location>
        <begin position="81"/>
        <end position="85"/>
    </location>
    <ligand>
        <name>GTP</name>
        <dbReference type="ChEBI" id="CHEBI:37565"/>
    </ligand>
</feature>
<feature type="binding site" evidence="1">
    <location>
        <begin position="135"/>
        <end position="138"/>
    </location>
    <ligand>
        <name>GTP</name>
        <dbReference type="ChEBI" id="CHEBI:37565"/>
    </ligand>
</feature>
<gene>
    <name type="primary">fusA</name>
    <name type="ordered locus">jhp_1118</name>
</gene>
<comment type="function">
    <text evidence="1">Catalyzes the GTP-dependent ribosomal translocation step during translation elongation. During this step, the ribosome changes from the pre-translocational (PRE) to the post-translocational (POST) state as the newly formed A-site-bound peptidyl-tRNA and P-site-bound deacylated tRNA move to the P and E sites, respectively. Catalyzes the coordinated movement of the two tRNA molecules, the mRNA and conformational changes in the ribosome (By similarity).</text>
</comment>
<comment type="subcellular location">
    <subcellularLocation>
        <location evidence="1">Cytoplasm</location>
    </subcellularLocation>
</comment>
<comment type="similarity">
    <text evidence="2">Belongs to the TRAFAC class translation factor GTPase superfamily. Classic translation factor GTPase family. EF-G/EF-2 subfamily.</text>
</comment>
<name>EFG_HELPJ</name>
<evidence type="ECO:0000250" key="1"/>
<evidence type="ECO:0000305" key="2"/>
<dbReference type="EMBL" id="AE001439">
    <property type="protein sequence ID" value="AAD06689.1"/>
    <property type="molecule type" value="Genomic_DNA"/>
</dbReference>
<dbReference type="PIR" id="G71847">
    <property type="entry name" value="G71847"/>
</dbReference>
<dbReference type="RefSeq" id="WP_000101866.1">
    <property type="nucleotide sequence ID" value="NC_000921.1"/>
</dbReference>
<dbReference type="SMR" id="Q9ZK24"/>
<dbReference type="KEGG" id="hpj:jhp_1118"/>
<dbReference type="PATRIC" id="fig|85963.30.peg.1459"/>
<dbReference type="eggNOG" id="COG0480">
    <property type="taxonomic scope" value="Bacteria"/>
</dbReference>
<dbReference type="Proteomes" id="UP000000804">
    <property type="component" value="Chromosome"/>
</dbReference>
<dbReference type="GO" id="GO:0005737">
    <property type="term" value="C:cytoplasm"/>
    <property type="evidence" value="ECO:0007669"/>
    <property type="project" value="UniProtKB-SubCell"/>
</dbReference>
<dbReference type="GO" id="GO:0005525">
    <property type="term" value="F:GTP binding"/>
    <property type="evidence" value="ECO:0007669"/>
    <property type="project" value="UniProtKB-UniRule"/>
</dbReference>
<dbReference type="GO" id="GO:0003924">
    <property type="term" value="F:GTPase activity"/>
    <property type="evidence" value="ECO:0007669"/>
    <property type="project" value="InterPro"/>
</dbReference>
<dbReference type="GO" id="GO:0003746">
    <property type="term" value="F:translation elongation factor activity"/>
    <property type="evidence" value="ECO:0007669"/>
    <property type="project" value="UniProtKB-UniRule"/>
</dbReference>
<dbReference type="GO" id="GO:0032790">
    <property type="term" value="P:ribosome disassembly"/>
    <property type="evidence" value="ECO:0007669"/>
    <property type="project" value="TreeGrafter"/>
</dbReference>
<dbReference type="CDD" id="cd01886">
    <property type="entry name" value="EF-G"/>
    <property type="match status" value="1"/>
</dbReference>
<dbReference type="CDD" id="cd16262">
    <property type="entry name" value="EFG_III"/>
    <property type="match status" value="1"/>
</dbReference>
<dbReference type="CDD" id="cd01434">
    <property type="entry name" value="EFG_mtEFG1_IV"/>
    <property type="match status" value="1"/>
</dbReference>
<dbReference type="CDD" id="cd03713">
    <property type="entry name" value="EFG_mtEFG_C"/>
    <property type="match status" value="1"/>
</dbReference>
<dbReference type="CDD" id="cd04088">
    <property type="entry name" value="EFG_mtEFG_II"/>
    <property type="match status" value="1"/>
</dbReference>
<dbReference type="FunFam" id="2.40.30.10:FF:000006">
    <property type="entry name" value="Elongation factor G"/>
    <property type="match status" value="1"/>
</dbReference>
<dbReference type="FunFam" id="3.30.230.10:FF:000003">
    <property type="entry name" value="Elongation factor G"/>
    <property type="match status" value="1"/>
</dbReference>
<dbReference type="FunFam" id="3.30.70.240:FF:000001">
    <property type="entry name" value="Elongation factor G"/>
    <property type="match status" value="1"/>
</dbReference>
<dbReference type="FunFam" id="3.30.70.870:FF:000001">
    <property type="entry name" value="Elongation factor G"/>
    <property type="match status" value="1"/>
</dbReference>
<dbReference type="FunFam" id="3.40.50.300:FF:000029">
    <property type="entry name" value="Elongation factor G"/>
    <property type="match status" value="1"/>
</dbReference>
<dbReference type="Gene3D" id="3.30.230.10">
    <property type="match status" value="1"/>
</dbReference>
<dbReference type="Gene3D" id="3.30.70.240">
    <property type="match status" value="1"/>
</dbReference>
<dbReference type="Gene3D" id="3.30.70.870">
    <property type="entry name" value="Elongation Factor G (Translational Gtpase), domain 3"/>
    <property type="match status" value="1"/>
</dbReference>
<dbReference type="Gene3D" id="3.40.50.300">
    <property type="entry name" value="P-loop containing nucleotide triphosphate hydrolases"/>
    <property type="match status" value="1"/>
</dbReference>
<dbReference type="Gene3D" id="2.40.30.10">
    <property type="entry name" value="Translation factors"/>
    <property type="match status" value="1"/>
</dbReference>
<dbReference type="HAMAP" id="MF_00054_B">
    <property type="entry name" value="EF_G_EF_2_B"/>
    <property type="match status" value="1"/>
</dbReference>
<dbReference type="InterPro" id="IPR041095">
    <property type="entry name" value="EFG_II"/>
</dbReference>
<dbReference type="InterPro" id="IPR009022">
    <property type="entry name" value="EFG_III"/>
</dbReference>
<dbReference type="InterPro" id="IPR035647">
    <property type="entry name" value="EFG_III/V"/>
</dbReference>
<dbReference type="InterPro" id="IPR047872">
    <property type="entry name" value="EFG_IV"/>
</dbReference>
<dbReference type="InterPro" id="IPR035649">
    <property type="entry name" value="EFG_V"/>
</dbReference>
<dbReference type="InterPro" id="IPR000640">
    <property type="entry name" value="EFG_V-like"/>
</dbReference>
<dbReference type="InterPro" id="IPR004161">
    <property type="entry name" value="EFTu-like_2"/>
</dbReference>
<dbReference type="InterPro" id="IPR031157">
    <property type="entry name" value="G_TR_CS"/>
</dbReference>
<dbReference type="InterPro" id="IPR027417">
    <property type="entry name" value="P-loop_NTPase"/>
</dbReference>
<dbReference type="InterPro" id="IPR020568">
    <property type="entry name" value="Ribosomal_Su5_D2-typ_SF"/>
</dbReference>
<dbReference type="InterPro" id="IPR014721">
    <property type="entry name" value="Ribsml_uS5_D2-typ_fold_subgr"/>
</dbReference>
<dbReference type="InterPro" id="IPR005225">
    <property type="entry name" value="Small_GTP-bd"/>
</dbReference>
<dbReference type="InterPro" id="IPR000795">
    <property type="entry name" value="T_Tr_GTP-bd_dom"/>
</dbReference>
<dbReference type="InterPro" id="IPR009000">
    <property type="entry name" value="Transl_B-barrel_sf"/>
</dbReference>
<dbReference type="InterPro" id="IPR004540">
    <property type="entry name" value="Transl_elong_EFG/EF2"/>
</dbReference>
<dbReference type="InterPro" id="IPR005517">
    <property type="entry name" value="Transl_elong_EFG/EF2_IV"/>
</dbReference>
<dbReference type="NCBIfam" id="TIGR00484">
    <property type="entry name" value="EF-G"/>
    <property type="match status" value="1"/>
</dbReference>
<dbReference type="NCBIfam" id="NF009379">
    <property type="entry name" value="PRK12740.1-3"/>
    <property type="match status" value="1"/>
</dbReference>
<dbReference type="NCBIfam" id="NF009381">
    <property type="entry name" value="PRK12740.1-5"/>
    <property type="match status" value="1"/>
</dbReference>
<dbReference type="NCBIfam" id="TIGR00231">
    <property type="entry name" value="small_GTP"/>
    <property type="match status" value="1"/>
</dbReference>
<dbReference type="PANTHER" id="PTHR43261:SF1">
    <property type="entry name" value="RIBOSOME-RELEASING FACTOR 2, MITOCHONDRIAL"/>
    <property type="match status" value="1"/>
</dbReference>
<dbReference type="PANTHER" id="PTHR43261">
    <property type="entry name" value="TRANSLATION ELONGATION FACTOR G-RELATED"/>
    <property type="match status" value="1"/>
</dbReference>
<dbReference type="Pfam" id="PF00679">
    <property type="entry name" value="EFG_C"/>
    <property type="match status" value="1"/>
</dbReference>
<dbReference type="Pfam" id="PF14492">
    <property type="entry name" value="EFG_III"/>
    <property type="match status" value="1"/>
</dbReference>
<dbReference type="Pfam" id="PF03764">
    <property type="entry name" value="EFG_IV"/>
    <property type="match status" value="1"/>
</dbReference>
<dbReference type="Pfam" id="PF00009">
    <property type="entry name" value="GTP_EFTU"/>
    <property type="match status" value="1"/>
</dbReference>
<dbReference type="Pfam" id="PF03144">
    <property type="entry name" value="GTP_EFTU_D2"/>
    <property type="match status" value="1"/>
</dbReference>
<dbReference type="PRINTS" id="PR00315">
    <property type="entry name" value="ELONGATNFCT"/>
</dbReference>
<dbReference type="SMART" id="SM00838">
    <property type="entry name" value="EFG_C"/>
    <property type="match status" value="1"/>
</dbReference>
<dbReference type="SMART" id="SM00889">
    <property type="entry name" value="EFG_IV"/>
    <property type="match status" value="1"/>
</dbReference>
<dbReference type="SUPFAM" id="SSF54980">
    <property type="entry name" value="EF-G C-terminal domain-like"/>
    <property type="match status" value="2"/>
</dbReference>
<dbReference type="SUPFAM" id="SSF52540">
    <property type="entry name" value="P-loop containing nucleoside triphosphate hydrolases"/>
    <property type="match status" value="1"/>
</dbReference>
<dbReference type="SUPFAM" id="SSF54211">
    <property type="entry name" value="Ribosomal protein S5 domain 2-like"/>
    <property type="match status" value="1"/>
</dbReference>
<dbReference type="SUPFAM" id="SSF50447">
    <property type="entry name" value="Translation proteins"/>
    <property type="match status" value="1"/>
</dbReference>
<dbReference type="PROSITE" id="PS00301">
    <property type="entry name" value="G_TR_1"/>
    <property type="match status" value="1"/>
</dbReference>
<dbReference type="PROSITE" id="PS51722">
    <property type="entry name" value="G_TR_2"/>
    <property type="match status" value="1"/>
</dbReference>